<sequence>MQKIVILRLGHRPERDKRITTHVGLTARALGAEGMLLASNDKGIKNAIEDVAERWGGDFYVENDVNWKSEIEKWKEEGGKVCHLSMYGINLPDAAGEIKLCDKLMIVVGAEKVPTEIYDLADWNVAIGNQPHSEVAAVALTMDRIAQEEPLKREFGYAELTIVPMERGKRVINNVKEE</sequence>
<keyword id="KW-0963">Cytoplasm</keyword>
<keyword id="KW-0489">Methyltransferase</keyword>
<keyword id="KW-0949">S-adenosyl-L-methionine</keyword>
<keyword id="KW-0808">Transferase</keyword>
<keyword id="KW-0819">tRNA processing</keyword>
<accession>Q12Z63</accession>
<feature type="chain" id="PRO_1000009472" description="tRNA (cytidine(56)-2'-O)-methyltransferase">
    <location>
        <begin position="1"/>
        <end position="178"/>
    </location>
</feature>
<feature type="binding site" evidence="1">
    <location>
        <position position="84"/>
    </location>
    <ligand>
        <name>S-adenosyl-L-methionine</name>
        <dbReference type="ChEBI" id="CHEBI:59789"/>
    </ligand>
</feature>
<feature type="binding site" evidence="1">
    <location>
        <begin position="109"/>
        <end position="113"/>
    </location>
    <ligand>
        <name>S-adenosyl-L-methionine</name>
        <dbReference type="ChEBI" id="CHEBI:59789"/>
    </ligand>
</feature>
<feature type="binding site" evidence="1">
    <location>
        <begin position="127"/>
        <end position="134"/>
    </location>
    <ligand>
        <name>S-adenosyl-L-methionine</name>
        <dbReference type="ChEBI" id="CHEBI:59789"/>
    </ligand>
</feature>
<evidence type="ECO:0000255" key="1">
    <source>
        <dbReference type="HAMAP-Rule" id="MF_00077"/>
    </source>
</evidence>
<comment type="function">
    <text evidence="1">Specifically catalyzes the AdoMet-dependent 2'-O-ribose methylation of cytidine at position 56 in tRNAs.</text>
</comment>
<comment type="catalytic activity">
    <reaction evidence="1">
        <text>cytidine(56) in tRNA + S-adenosyl-L-methionine = 2'-O-methylcytidine(56) in tRNA + S-adenosyl-L-homocysteine + H(+)</text>
        <dbReference type="Rhea" id="RHEA:42968"/>
        <dbReference type="Rhea" id="RHEA-COMP:10308"/>
        <dbReference type="Rhea" id="RHEA-COMP:10309"/>
        <dbReference type="ChEBI" id="CHEBI:15378"/>
        <dbReference type="ChEBI" id="CHEBI:57856"/>
        <dbReference type="ChEBI" id="CHEBI:59789"/>
        <dbReference type="ChEBI" id="CHEBI:74495"/>
        <dbReference type="ChEBI" id="CHEBI:82748"/>
        <dbReference type="EC" id="2.1.1.206"/>
    </reaction>
</comment>
<comment type="subunit">
    <text evidence="1">Homodimer.</text>
</comment>
<comment type="subcellular location">
    <subcellularLocation>
        <location evidence="1">Cytoplasm</location>
    </subcellularLocation>
</comment>
<comment type="similarity">
    <text evidence="1">Belongs to the aTrm56 family.</text>
</comment>
<gene>
    <name type="ordered locus">Mbur_0256</name>
</gene>
<name>TRM56_METBU</name>
<protein>
    <recommendedName>
        <fullName evidence="1">tRNA (cytidine(56)-2'-O)-methyltransferase</fullName>
        <ecNumber evidence="1">2.1.1.206</ecNumber>
    </recommendedName>
    <alternativeName>
        <fullName evidence="1">tRNA ribose 2'-O-methyltransferase aTrm56</fullName>
    </alternativeName>
</protein>
<organism>
    <name type="scientific">Methanococcoides burtonii (strain DSM 6242 / NBRC 107633 / OCM 468 / ACE-M)</name>
    <dbReference type="NCBI Taxonomy" id="259564"/>
    <lineage>
        <taxon>Archaea</taxon>
        <taxon>Methanobacteriati</taxon>
        <taxon>Methanobacteriota</taxon>
        <taxon>Stenosarchaea group</taxon>
        <taxon>Methanomicrobia</taxon>
        <taxon>Methanosarcinales</taxon>
        <taxon>Methanosarcinaceae</taxon>
        <taxon>Methanococcoides</taxon>
    </lineage>
</organism>
<reference key="1">
    <citation type="journal article" date="2009" name="ISME J.">
        <title>The genome sequence of the psychrophilic archaeon, Methanococcoides burtonii: the role of genome evolution in cold adaptation.</title>
        <authorList>
            <person name="Allen M.A."/>
            <person name="Lauro F.M."/>
            <person name="Williams T.J."/>
            <person name="Burg D."/>
            <person name="Siddiqui K.S."/>
            <person name="De Francisci D."/>
            <person name="Chong K.W."/>
            <person name="Pilak O."/>
            <person name="Chew H.H."/>
            <person name="De Maere M.Z."/>
            <person name="Ting L."/>
            <person name="Katrib M."/>
            <person name="Ng C."/>
            <person name="Sowers K.R."/>
            <person name="Galperin M.Y."/>
            <person name="Anderson I.J."/>
            <person name="Ivanova N."/>
            <person name="Dalin E."/>
            <person name="Martinez M."/>
            <person name="Lapidus A."/>
            <person name="Hauser L."/>
            <person name="Land M."/>
            <person name="Thomas T."/>
            <person name="Cavicchioli R."/>
        </authorList>
    </citation>
    <scope>NUCLEOTIDE SEQUENCE [LARGE SCALE GENOMIC DNA]</scope>
    <source>
        <strain>DSM 6242 / NBRC 107633 / OCM 468 / ACE-M</strain>
    </source>
</reference>
<dbReference type="EC" id="2.1.1.206" evidence="1"/>
<dbReference type="EMBL" id="CP000300">
    <property type="protein sequence ID" value="ABE51263.1"/>
    <property type="molecule type" value="Genomic_DNA"/>
</dbReference>
<dbReference type="RefSeq" id="WP_011498425.1">
    <property type="nucleotide sequence ID" value="NC_007955.1"/>
</dbReference>
<dbReference type="SMR" id="Q12Z63"/>
<dbReference type="STRING" id="259564.Mbur_0256"/>
<dbReference type="GeneID" id="3998751"/>
<dbReference type="KEGG" id="mbu:Mbur_0256"/>
<dbReference type="HOGENOM" id="CLU_123709_0_0_2"/>
<dbReference type="OrthoDB" id="14397at2157"/>
<dbReference type="Proteomes" id="UP000001979">
    <property type="component" value="Chromosome"/>
</dbReference>
<dbReference type="GO" id="GO:0005737">
    <property type="term" value="C:cytoplasm"/>
    <property type="evidence" value="ECO:0007669"/>
    <property type="project" value="UniProtKB-SubCell"/>
</dbReference>
<dbReference type="GO" id="GO:0106059">
    <property type="term" value="F:tRNA (cytidine(56)-2'-O)-methyltransferase activity"/>
    <property type="evidence" value="ECO:0007669"/>
    <property type="project" value="UniProtKB-EC"/>
</dbReference>
<dbReference type="GO" id="GO:0002128">
    <property type="term" value="P:tRNA nucleoside ribose methylation"/>
    <property type="evidence" value="ECO:0007669"/>
    <property type="project" value="UniProtKB-UniRule"/>
</dbReference>
<dbReference type="CDD" id="cd18083">
    <property type="entry name" value="aTrm56-like"/>
    <property type="match status" value="1"/>
</dbReference>
<dbReference type="Gene3D" id="3.40.1280.10">
    <property type="match status" value="1"/>
</dbReference>
<dbReference type="HAMAP" id="MF_00077">
    <property type="entry name" value="tRNA_methyltr_aTrm56"/>
    <property type="match status" value="1"/>
</dbReference>
<dbReference type="InterPro" id="IPR029028">
    <property type="entry name" value="Alpha/beta_knot_MTases"/>
</dbReference>
<dbReference type="InterPro" id="IPR029026">
    <property type="entry name" value="tRNA_m1G_MTases_N"/>
</dbReference>
<dbReference type="InterPro" id="IPR002845">
    <property type="entry name" value="tRNA_mtfrase_aTrm56"/>
</dbReference>
<dbReference type="NCBIfam" id="NF003048">
    <property type="entry name" value="PRK03958.1"/>
    <property type="match status" value="1"/>
</dbReference>
<dbReference type="PANTHER" id="PTHR42197">
    <property type="entry name" value="TRNA (CYTIDINE(56)-2'-O)-METHYLTRANSFERASE"/>
    <property type="match status" value="1"/>
</dbReference>
<dbReference type="PANTHER" id="PTHR42197:SF1">
    <property type="entry name" value="TRNA (CYTIDINE(56)-2'-O)-METHYLTRANSFERASE"/>
    <property type="match status" value="1"/>
</dbReference>
<dbReference type="Pfam" id="PF01994">
    <property type="entry name" value="Trm56"/>
    <property type="match status" value="1"/>
</dbReference>
<dbReference type="PIRSF" id="PIRSF016123">
    <property type="entry name" value="UCP016123"/>
    <property type="match status" value="1"/>
</dbReference>
<dbReference type="SUPFAM" id="SSF75217">
    <property type="entry name" value="alpha/beta knot"/>
    <property type="match status" value="1"/>
</dbReference>
<proteinExistence type="inferred from homology"/>